<accession>Q4JB01</accession>
<gene>
    <name evidence="1" type="primary">egsA</name>
    <name type="ordered locus">Saci_0640</name>
</gene>
<feature type="chain" id="PRO_0000157352" description="Glycerol-1-phosphate dehydrogenase [NAD(P)+]">
    <location>
        <begin position="1"/>
        <end position="351"/>
    </location>
</feature>
<feature type="binding site" evidence="1">
    <location>
        <begin position="97"/>
        <end position="101"/>
    </location>
    <ligand>
        <name>NAD(+)</name>
        <dbReference type="ChEBI" id="CHEBI:57540"/>
    </ligand>
</feature>
<feature type="binding site" evidence="1">
    <location>
        <begin position="119"/>
        <end position="122"/>
    </location>
    <ligand>
        <name>NAD(+)</name>
        <dbReference type="ChEBI" id="CHEBI:57540"/>
    </ligand>
</feature>
<feature type="binding site" evidence="1">
    <location>
        <position position="124"/>
    </location>
    <ligand>
        <name>substrate</name>
    </ligand>
</feature>
<feature type="binding site" evidence="1">
    <location>
        <position position="128"/>
    </location>
    <ligand>
        <name>NAD(+)</name>
        <dbReference type="ChEBI" id="CHEBI:57540"/>
    </ligand>
</feature>
<feature type="binding site" evidence="1">
    <location>
        <position position="171"/>
    </location>
    <ligand>
        <name>substrate</name>
    </ligand>
</feature>
<feature type="binding site" evidence="1">
    <location>
        <position position="171"/>
    </location>
    <ligand>
        <name>Zn(2+)</name>
        <dbReference type="ChEBI" id="CHEBI:29105"/>
        <note>catalytic</note>
    </ligand>
</feature>
<feature type="binding site" evidence="1">
    <location>
        <position position="251"/>
    </location>
    <ligand>
        <name>Zn(2+)</name>
        <dbReference type="ChEBI" id="CHEBI:29105"/>
        <note>catalytic</note>
    </ligand>
</feature>
<feature type="binding site" evidence="1">
    <location>
        <position position="255"/>
    </location>
    <ligand>
        <name>substrate</name>
    </ligand>
</feature>
<feature type="binding site" evidence="1">
    <location>
        <position position="267"/>
    </location>
    <ligand>
        <name>Zn(2+)</name>
        <dbReference type="ChEBI" id="CHEBI:29105"/>
        <note>catalytic</note>
    </ligand>
</feature>
<proteinExistence type="inferred from homology"/>
<reference key="1">
    <citation type="journal article" date="2005" name="J. Bacteriol.">
        <title>The genome of Sulfolobus acidocaldarius, a model organism of the Crenarchaeota.</title>
        <authorList>
            <person name="Chen L."/>
            <person name="Bruegger K."/>
            <person name="Skovgaard M."/>
            <person name="Redder P."/>
            <person name="She Q."/>
            <person name="Torarinsson E."/>
            <person name="Greve B."/>
            <person name="Awayez M."/>
            <person name="Zibat A."/>
            <person name="Klenk H.-P."/>
            <person name="Garrett R.A."/>
        </authorList>
    </citation>
    <scope>NUCLEOTIDE SEQUENCE [LARGE SCALE GENOMIC DNA]</scope>
    <source>
        <strain>ATCC 33909 / DSM 639 / JCM 8929 / NBRC 15157 / NCIMB 11770</strain>
    </source>
</reference>
<name>G1PDH_SULAC</name>
<evidence type="ECO:0000255" key="1">
    <source>
        <dbReference type="HAMAP-Rule" id="MF_00497"/>
    </source>
</evidence>
<evidence type="ECO:0000305" key="2"/>
<comment type="function">
    <text evidence="1">Catalyzes the NAD(P)H-dependent reduction of dihydroxyacetonephosphate (DHAP or glycerone phosphate) to glycerol 1-phosphate (G1P). The G1P thus generated is used as the glycerophosphate backbone of phospholipids in the cellular membranes of Archaea.</text>
</comment>
<comment type="catalytic activity">
    <reaction evidence="1">
        <text>sn-glycerol 1-phosphate + NAD(+) = dihydroxyacetone phosphate + NADH + H(+)</text>
        <dbReference type="Rhea" id="RHEA:21412"/>
        <dbReference type="ChEBI" id="CHEBI:15378"/>
        <dbReference type="ChEBI" id="CHEBI:57540"/>
        <dbReference type="ChEBI" id="CHEBI:57642"/>
        <dbReference type="ChEBI" id="CHEBI:57685"/>
        <dbReference type="ChEBI" id="CHEBI:57945"/>
        <dbReference type="EC" id="1.1.1.261"/>
    </reaction>
</comment>
<comment type="catalytic activity">
    <reaction evidence="1">
        <text>sn-glycerol 1-phosphate + NADP(+) = dihydroxyacetone phosphate + NADPH + H(+)</text>
        <dbReference type="Rhea" id="RHEA:21416"/>
        <dbReference type="ChEBI" id="CHEBI:15378"/>
        <dbReference type="ChEBI" id="CHEBI:57642"/>
        <dbReference type="ChEBI" id="CHEBI:57685"/>
        <dbReference type="ChEBI" id="CHEBI:57783"/>
        <dbReference type="ChEBI" id="CHEBI:58349"/>
        <dbReference type="EC" id="1.1.1.261"/>
    </reaction>
</comment>
<comment type="cofactor">
    <cofactor evidence="1">
        <name>Zn(2+)</name>
        <dbReference type="ChEBI" id="CHEBI:29105"/>
    </cofactor>
    <text evidence="1">Binds 1 zinc ion per subunit.</text>
</comment>
<comment type="pathway">
    <text evidence="1">Membrane lipid metabolism; glycerophospholipid metabolism.</text>
</comment>
<comment type="subunit">
    <text evidence="1">Homodimer.</text>
</comment>
<comment type="subcellular location">
    <subcellularLocation>
        <location evidence="1">Cytoplasm</location>
    </subcellularLocation>
</comment>
<comment type="similarity">
    <text evidence="1">Belongs to the glycerol-1-phosphate dehydrogenase family.</text>
</comment>
<comment type="sequence caution" evidence="2">
    <conflict type="erroneous initiation">
        <sequence resource="EMBL-CDS" id="AAY80028"/>
    </conflict>
</comment>
<protein>
    <recommendedName>
        <fullName evidence="1">Glycerol-1-phosphate dehydrogenase [NAD(P)+]</fullName>
        <shortName evidence="1">G1P dehydrogenase</shortName>
        <shortName evidence="1">G1PDH</shortName>
        <ecNumber evidence="1">1.1.1.261</ecNumber>
    </recommendedName>
    <alternativeName>
        <fullName evidence="1">Enantiomeric glycerophosphate synthase</fullName>
    </alternativeName>
    <alternativeName>
        <fullName evidence="1">sn-glycerol-1-phosphate dehydrogenase</fullName>
    </alternativeName>
</protein>
<organism>
    <name type="scientific">Sulfolobus acidocaldarius (strain ATCC 33909 / DSM 639 / JCM 8929 / NBRC 15157 / NCIMB 11770)</name>
    <dbReference type="NCBI Taxonomy" id="330779"/>
    <lineage>
        <taxon>Archaea</taxon>
        <taxon>Thermoproteota</taxon>
        <taxon>Thermoprotei</taxon>
        <taxon>Sulfolobales</taxon>
        <taxon>Sulfolobaceae</taxon>
        <taxon>Sulfolobus</taxon>
    </lineage>
</organism>
<dbReference type="EC" id="1.1.1.261" evidence="1"/>
<dbReference type="EMBL" id="CP000077">
    <property type="protein sequence ID" value="AAY80028.1"/>
    <property type="status" value="ALT_INIT"/>
    <property type="molecule type" value="Genomic_DNA"/>
</dbReference>
<dbReference type="RefSeq" id="WP_015385466.1">
    <property type="nucleotide sequence ID" value="NC_007181.1"/>
</dbReference>
<dbReference type="SMR" id="Q4JB01"/>
<dbReference type="STRING" id="330779.Saci_0640"/>
<dbReference type="GeneID" id="14551162"/>
<dbReference type="KEGG" id="sai:Saci_0640"/>
<dbReference type="PATRIC" id="fig|330779.12.peg.615"/>
<dbReference type="eggNOG" id="arCOG00982">
    <property type="taxonomic scope" value="Archaea"/>
</dbReference>
<dbReference type="HOGENOM" id="CLU_038362_0_0_2"/>
<dbReference type="UniPathway" id="UPA00940"/>
<dbReference type="Proteomes" id="UP000001018">
    <property type="component" value="Chromosome"/>
</dbReference>
<dbReference type="GO" id="GO:0005737">
    <property type="term" value="C:cytoplasm"/>
    <property type="evidence" value="ECO:0007669"/>
    <property type="project" value="UniProtKB-SubCell"/>
</dbReference>
<dbReference type="GO" id="GO:0106357">
    <property type="term" value="F:glycerol-1-phosphate dehydrogenase (NAD+) activity"/>
    <property type="evidence" value="ECO:0007669"/>
    <property type="project" value="RHEA"/>
</dbReference>
<dbReference type="GO" id="GO:0106358">
    <property type="term" value="F:glycerol-1-phosphate dehydrogenase (NADP+) activity"/>
    <property type="evidence" value="ECO:0007669"/>
    <property type="project" value="RHEA"/>
</dbReference>
<dbReference type="GO" id="GO:0046872">
    <property type="term" value="F:metal ion binding"/>
    <property type="evidence" value="ECO:0007669"/>
    <property type="project" value="UniProtKB-KW"/>
</dbReference>
<dbReference type="GO" id="GO:0006650">
    <property type="term" value="P:glycerophospholipid metabolic process"/>
    <property type="evidence" value="ECO:0007669"/>
    <property type="project" value="UniProtKB-UniRule"/>
</dbReference>
<dbReference type="GO" id="GO:0008654">
    <property type="term" value="P:phospholipid biosynthetic process"/>
    <property type="evidence" value="ECO:0007669"/>
    <property type="project" value="UniProtKB-KW"/>
</dbReference>
<dbReference type="CDD" id="cd08173">
    <property type="entry name" value="Gro1PDH"/>
    <property type="match status" value="1"/>
</dbReference>
<dbReference type="Gene3D" id="3.40.50.1970">
    <property type="match status" value="1"/>
</dbReference>
<dbReference type="Gene3D" id="1.20.1090.10">
    <property type="entry name" value="Dehydroquinate synthase-like - alpha domain"/>
    <property type="match status" value="1"/>
</dbReference>
<dbReference type="HAMAP" id="MF_00497_A">
    <property type="entry name" value="G1P_dehydrogenase_A"/>
    <property type="match status" value="1"/>
</dbReference>
<dbReference type="InterPro" id="IPR023002">
    <property type="entry name" value="G1P_dehydrogenase_arc"/>
</dbReference>
<dbReference type="InterPro" id="IPR032837">
    <property type="entry name" value="G1PDH"/>
</dbReference>
<dbReference type="InterPro" id="IPR016205">
    <property type="entry name" value="Glycerol_DH"/>
</dbReference>
<dbReference type="NCBIfam" id="NF002022">
    <property type="entry name" value="PRK00843.1"/>
    <property type="match status" value="1"/>
</dbReference>
<dbReference type="PANTHER" id="PTHR43616">
    <property type="entry name" value="GLYCEROL DEHYDROGENASE"/>
    <property type="match status" value="1"/>
</dbReference>
<dbReference type="PANTHER" id="PTHR43616:SF5">
    <property type="entry name" value="GLYCEROL DEHYDROGENASE 1"/>
    <property type="match status" value="1"/>
</dbReference>
<dbReference type="Pfam" id="PF13685">
    <property type="entry name" value="Fe-ADH_2"/>
    <property type="match status" value="1"/>
</dbReference>
<dbReference type="PIRSF" id="PIRSF000112">
    <property type="entry name" value="Glycerol_dehydrogenase"/>
    <property type="match status" value="1"/>
</dbReference>
<dbReference type="SUPFAM" id="SSF56796">
    <property type="entry name" value="Dehydroquinate synthase-like"/>
    <property type="match status" value="1"/>
</dbReference>
<keyword id="KW-0963">Cytoplasm</keyword>
<keyword id="KW-0444">Lipid biosynthesis</keyword>
<keyword id="KW-0443">Lipid metabolism</keyword>
<keyword id="KW-0479">Metal-binding</keyword>
<keyword id="KW-0520">NAD</keyword>
<keyword id="KW-0521">NADP</keyword>
<keyword id="KW-0560">Oxidoreductase</keyword>
<keyword id="KW-0594">Phospholipid biosynthesis</keyword>
<keyword id="KW-1208">Phospholipid metabolism</keyword>
<keyword id="KW-1185">Reference proteome</keyword>
<keyword id="KW-0862">Zinc</keyword>
<sequence>MEIKEHIINLPKHIYTGYGILDNFRNYLQTLNLPQPFLVITGPVIHQEIFSKRIEEHIKDFKYEVVIVNKSDLSEAEKVEDIARQKGIKTILGVGGGTVIDIAKFTAYKIDREFISIPTSPSHDGITSPFAAIKGLGKPISIKAKEPLAIISDVEILASAPRRLINAGIGDTLGKITAVRDWRLAHKLRGEYYGDYTASLALMSARHALSCTKIINKDIRAGVRVLTEALISSGVAMGMAGSTRPASGSEHLFAHAIELLYPNLGLHGELVALGTIMMAYIHGINWRRIRRAMKKIGLPVTSKQIGIPDEGIIKALTIAHSIRPERYTILGDRGLTWESAEKIARETGVIS</sequence>